<protein>
    <recommendedName>
        <fullName evidence="5">RxLR effector protein Avh5</fullName>
    </recommendedName>
    <alternativeName>
        <fullName evidence="5">Avirulence homolog protein 5</fullName>
    </alternativeName>
</protein>
<keyword id="KW-0964">Secreted</keyword>
<keyword id="KW-0732">Signal</keyword>
<keyword id="KW-0843">Virulence</keyword>
<reference key="1">
    <citation type="journal article" date="2011" name="Plant Cell">
        <title>Transcriptional programming and functional interactions within the Phytophthora sojae RXLR effector repertoire.</title>
        <authorList>
            <person name="Wang Q."/>
            <person name="Han C."/>
            <person name="Ferreira A.O."/>
            <person name="Yu X."/>
            <person name="Ye W."/>
            <person name="Tripathy S."/>
            <person name="Kale S.D."/>
            <person name="Gu B."/>
            <person name="Sheng Y."/>
            <person name="Sui Y."/>
            <person name="Wang X."/>
            <person name="Zhang Z."/>
            <person name="Cheng B."/>
            <person name="Dong S."/>
            <person name="Shan W."/>
            <person name="Zheng X."/>
            <person name="Dou D."/>
            <person name="Tyler B.M."/>
            <person name="Wang Y."/>
        </authorList>
    </citation>
    <scope>NUCLEOTIDE SEQUENCE [GENOMIC DNA]</scope>
    <scope>IDENTIFICATION</scope>
    <scope>FUNCTION</scope>
    <scope>DOMAIN</scope>
    <source>
        <strain>P7064</strain>
        <strain>P7074</strain>
        <strain>P7076</strain>
    </source>
</reference>
<reference key="2">
    <citation type="journal article" date="2010" name="Cell">
        <title>External lipid PI3P mediates entry of eukaryotic pathogen effectors into plant and animal host cells.</title>
        <authorList>
            <person name="Kale S.D."/>
            <person name="Gu B."/>
            <person name="Capelluto D.G."/>
            <person name="Dou D."/>
            <person name="Feldman E."/>
            <person name="Rumore A."/>
            <person name="Arredondo F.D."/>
            <person name="Hanlon R."/>
            <person name="Fudal I."/>
            <person name="Rouxel T."/>
            <person name="Lawrence C.B."/>
            <person name="Shan W."/>
            <person name="Tyler B.M."/>
        </authorList>
    </citation>
    <scope>DOMAIN</scope>
    <scope>SUBCELLULAR LOCATION</scope>
</reference>
<gene>
    <name evidence="5" type="primary">Avh5</name>
</gene>
<evidence type="ECO:0000250" key="1">
    <source>
        <dbReference type="UniProtKB" id="G4ZKT3"/>
    </source>
</evidence>
<evidence type="ECO:0000255" key="2"/>
<evidence type="ECO:0000269" key="3">
    <source>
    </source>
</evidence>
<evidence type="ECO:0000269" key="4">
    <source>
    </source>
</evidence>
<evidence type="ECO:0000303" key="5">
    <source>
    </source>
</evidence>
<evidence type="ECO:0000305" key="6"/>
<evidence type="ECO:0000305" key="7">
    <source>
    </source>
</evidence>
<organism>
    <name type="scientific">Phytophthora sojae</name>
    <name type="common">Soybean stem and root rot agent</name>
    <name type="synonym">Phytophthora megasperma f. sp. glycines</name>
    <dbReference type="NCBI Taxonomy" id="67593"/>
    <lineage>
        <taxon>Eukaryota</taxon>
        <taxon>Sar</taxon>
        <taxon>Stramenopiles</taxon>
        <taxon>Oomycota</taxon>
        <taxon>Peronosporales</taxon>
        <taxon>Peronosporaceae</taxon>
        <taxon>Phytophthora</taxon>
    </lineage>
</organism>
<proteinExistence type="inferred from homology"/>
<name>AVH5_PHYSO</name>
<accession>E0W547</accession>
<dbReference type="EMBL" id="JN253639">
    <property type="protein sequence ID" value="AEK80452.1"/>
    <property type="molecule type" value="Genomic_DNA"/>
</dbReference>
<dbReference type="EMBL" id="JN253640">
    <property type="protein sequence ID" value="AEK80453.1"/>
    <property type="molecule type" value="Genomic_DNA"/>
</dbReference>
<dbReference type="EMBL" id="JN253641">
    <property type="protein sequence ID" value="AEK80454.1"/>
    <property type="molecule type" value="Genomic_DNA"/>
</dbReference>
<dbReference type="SMR" id="E0W547"/>
<dbReference type="KEGG" id="psoj:PHYSODRAFT_286169"/>
<dbReference type="VEuPathDB" id="FungiDB:PHYSODRAFT_286169"/>
<dbReference type="HOGENOM" id="CLU_1889900_0_0_1"/>
<dbReference type="OMA" id="REYIDWR"/>
<dbReference type="OrthoDB" id="129247at2759"/>
<dbReference type="PHI-base" id="PHI:2692"/>
<dbReference type="GO" id="GO:0005576">
    <property type="term" value="C:extracellular region"/>
    <property type="evidence" value="ECO:0007669"/>
    <property type="project" value="UniProtKB-SubCell"/>
</dbReference>
<dbReference type="GO" id="GO:0043657">
    <property type="term" value="C:host cell"/>
    <property type="evidence" value="ECO:0007669"/>
    <property type="project" value="UniProtKB-SubCell"/>
</dbReference>
<dbReference type="Gene3D" id="1.10.10.2460">
    <property type="match status" value="1"/>
</dbReference>
<dbReference type="InterPro" id="IPR031825">
    <property type="entry name" value="RXLR"/>
</dbReference>
<dbReference type="Pfam" id="PF16810">
    <property type="entry name" value="RXLR"/>
    <property type="match status" value="1"/>
</dbReference>
<comment type="function">
    <text evidence="4">Effector that suppresses plant defense responses during the early stages of pathogen infection. Suppresses cell death induced by effectors and PAMPs in plant hosts.</text>
</comment>
<comment type="subcellular location">
    <subcellularLocation>
        <location evidence="3">Secreted</location>
    </subcellularLocation>
    <subcellularLocation>
        <location evidence="3">Host cell</location>
    </subcellularLocation>
</comment>
<comment type="domain">
    <text evidence="7">The RxLR-dEER motif acts to carry the protein into the host cell cytoplasm through binding to cell surface phosphatidylinositol-3-phosphate.</text>
</comment>
<comment type="similarity">
    <text evidence="6">Belongs to the RxLR effector family.</text>
</comment>
<sequence length="135" mass="15528">MRLQFFLVMAVATLATISATRVPDDANLQSVNAPVQTVTRSRRFLRTADTDIVYEPKVHNPGKKQVFIEDKLQKALTDPKKNKKLYARWYNSGFTVKQVEGGLDQNENRELELTYKNLALGYAKYYQARRSQEAK</sequence>
<feature type="signal peptide" evidence="2">
    <location>
        <begin position="1"/>
        <end position="19"/>
    </location>
</feature>
<feature type="chain" id="PRO_5007652829" description="RxLR effector protein Avh5" evidence="2">
    <location>
        <begin position="20"/>
        <end position="135"/>
    </location>
</feature>
<feature type="short sequence motif" description="RxLR-dEER" evidence="7">
    <location>
        <begin position="43"/>
        <end position="71"/>
    </location>
</feature>
<feature type="binding site" evidence="1">
    <location>
        <position position="81"/>
    </location>
    <ligand>
        <name>a 1,2-diacyl-sn-glycero-3-phospho-(1D-myo-inositol-3-phosphate)</name>
        <dbReference type="ChEBI" id="CHEBI:58088"/>
    </ligand>
</feature>
<feature type="binding site" evidence="1">
    <location>
        <position position="83"/>
    </location>
    <ligand>
        <name>a 1,2-diacyl-sn-glycero-3-phospho-(1D-myo-inositol-3-phosphate)</name>
        <dbReference type="ChEBI" id="CHEBI:58088"/>
    </ligand>
</feature>
<feature type="binding site" evidence="1">
    <location>
        <position position="84"/>
    </location>
    <ligand>
        <name>a 1,2-diacyl-sn-glycero-3-phospho-(1D-myo-inositol-3-phosphate)</name>
        <dbReference type="ChEBI" id="CHEBI:58088"/>
    </ligand>
</feature>